<organism>
    <name type="scientific">Neisseria gonorrhoeae (strain ATCC 700825 / FA 1090)</name>
    <dbReference type="NCBI Taxonomy" id="242231"/>
    <lineage>
        <taxon>Bacteria</taxon>
        <taxon>Pseudomonadati</taxon>
        <taxon>Pseudomonadota</taxon>
        <taxon>Betaproteobacteria</taxon>
        <taxon>Neisseriales</taxon>
        <taxon>Neisseriaceae</taxon>
        <taxon>Neisseria</taxon>
    </lineage>
</organism>
<dbReference type="EMBL" id="AE004969">
    <property type="protein sequence ID" value="AAW90441.1"/>
    <property type="molecule type" value="Genomic_DNA"/>
</dbReference>
<dbReference type="RefSeq" id="WP_003690064.1">
    <property type="nucleotide sequence ID" value="NC_002946.2"/>
</dbReference>
<dbReference type="RefSeq" id="YP_208853.1">
    <property type="nucleotide sequence ID" value="NC_002946.2"/>
</dbReference>
<dbReference type="SMR" id="Q5F5U6"/>
<dbReference type="STRING" id="242231.NGO_1823"/>
<dbReference type="GeneID" id="66754314"/>
<dbReference type="KEGG" id="ngo:NGO_1823"/>
<dbReference type="PATRIC" id="fig|242231.10.peg.2190"/>
<dbReference type="HOGENOM" id="CLU_055188_4_2_4"/>
<dbReference type="Proteomes" id="UP000000535">
    <property type="component" value="Chromosome"/>
</dbReference>
<dbReference type="GO" id="GO:0022625">
    <property type="term" value="C:cytosolic large ribosomal subunit"/>
    <property type="evidence" value="ECO:0007669"/>
    <property type="project" value="TreeGrafter"/>
</dbReference>
<dbReference type="GO" id="GO:0019843">
    <property type="term" value="F:rRNA binding"/>
    <property type="evidence" value="ECO:0007669"/>
    <property type="project" value="UniProtKB-UniRule"/>
</dbReference>
<dbReference type="GO" id="GO:0003735">
    <property type="term" value="F:structural constituent of ribosome"/>
    <property type="evidence" value="ECO:0007669"/>
    <property type="project" value="InterPro"/>
</dbReference>
<dbReference type="GO" id="GO:0006412">
    <property type="term" value="P:translation"/>
    <property type="evidence" value="ECO:0007669"/>
    <property type="project" value="UniProtKB-UniRule"/>
</dbReference>
<dbReference type="Gene3D" id="3.100.10.10">
    <property type="match status" value="1"/>
</dbReference>
<dbReference type="HAMAP" id="MF_01341">
    <property type="entry name" value="Ribosomal_uL15"/>
    <property type="match status" value="1"/>
</dbReference>
<dbReference type="InterPro" id="IPR030878">
    <property type="entry name" value="Ribosomal_uL15"/>
</dbReference>
<dbReference type="InterPro" id="IPR021131">
    <property type="entry name" value="Ribosomal_uL15/eL18"/>
</dbReference>
<dbReference type="InterPro" id="IPR036227">
    <property type="entry name" value="Ribosomal_uL15/eL18_sf"/>
</dbReference>
<dbReference type="InterPro" id="IPR005749">
    <property type="entry name" value="Ribosomal_uL15_bac-type"/>
</dbReference>
<dbReference type="InterPro" id="IPR001196">
    <property type="entry name" value="Ribosomal_uL15_CS"/>
</dbReference>
<dbReference type="NCBIfam" id="TIGR01071">
    <property type="entry name" value="rplO_bact"/>
    <property type="match status" value="1"/>
</dbReference>
<dbReference type="PANTHER" id="PTHR12934">
    <property type="entry name" value="50S RIBOSOMAL PROTEIN L15"/>
    <property type="match status" value="1"/>
</dbReference>
<dbReference type="PANTHER" id="PTHR12934:SF11">
    <property type="entry name" value="LARGE RIBOSOMAL SUBUNIT PROTEIN UL15M"/>
    <property type="match status" value="1"/>
</dbReference>
<dbReference type="Pfam" id="PF00828">
    <property type="entry name" value="Ribosomal_L27A"/>
    <property type="match status" value="1"/>
</dbReference>
<dbReference type="SUPFAM" id="SSF52080">
    <property type="entry name" value="Ribosomal proteins L15p and L18e"/>
    <property type="match status" value="1"/>
</dbReference>
<dbReference type="PROSITE" id="PS00475">
    <property type="entry name" value="RIBOSOMAL_L15"/>
    <property type="match status" value="1"/>
</dbReference>
<name>RL15_NEIG1</name>
<protein>
    <recommendedName>
        <fullName evidence="1">Large ribosomal subunit protein uL15</fullName>
    </recommendedName>
    <alternativeName>
        <fullName evidence="3">50S ribosomal protein L15</fullName>
    </alternativeName>
</protein>
<comment type="function">
    <text evidence="1">Binds to the 23S rRNA.</text>
</comment>
<comment type="subunit">
    <text evidence="1">Part of the 50S ribosomal subunit.</text>
</comment>
<comment type="similarity">
    <text evidence="1">Belongs to the universal ribosomal protein uL15 family.</text>
</comment>
<reference key="1">
    <citation type="submission" date="2003-03" db="EMBL/GenBank/DDBJ databases">
        <title>The complete genome sequence of Neisseria gonorrhoeae.</title>
        <authorList>
            <person name="Lewis L.A."/>
            <person name="Gillaspy A.F."/>
            <person name="McLaughlin R.E."/>
            <person name="Gipson M."/>
            <person name="Ducey T.F."/>
            <person name="Ownbey T."/>
            <person name="Hartman K."/>
            <person name="Nydick C."/>
            <person name="Carson M.B."/>
            <person name="Vaughn J."/>
            <person name="Thomson C."/>
            <person name="Song L."/>
            <person name="Lin S."/>
            <person name="Yuan X."/>
            <person name="Najar F."/>
            <person name="Zhan M."/>
            <person name="Ren Q."/>
            <person name="Zhu H."/>
            <person name="Qi S."/>
            <person name="Kenton S.M."/>
            <person name="Lai H."/>
            <person name="White J.D."/>
            <person name="Clifton S."/>
            <person name="Roe B.A."/>
            <person name="Dyer D.W."/>
        </authorList>
    </citation>
    <scope>NUCLEOTIDE SEQUENCE [LARGE SCALE GENOMIC DNA]</scope>
    <source>
        <strain>ATCC 700825 / FA 1090</strain>
    </source>
</reference>
<keyword id="KW-1185">Reference proteome</keyword>
<keyword id="KW-0687">Ribonucleoprotein</keyword>
<keyword id="KW-0689">Ribosomal protein</keyword>
<keyword id="KW-0694">RNA-binding</keyword>
<keyword id="KW-0699">rRNA-binding</keyword>
<evidence type="ECO:0000255" key="1">
    <source>
        <dbReference type="HAMAP-Rule" id="MF_01341"/>
    </source>
</evidence>
<evidence type="ECO:0000256" key="2">
    <source>
        <dbReference type="SAM" id="MobiDB-lite"/>
    </source>
</evidence>
<evidence type="ECO:0000305" key="3"/>
<accession>Q5F5U6</accession>
<gene>
    <name evidence="1" type="primary">rplO</name>
    <name type="ordered locus">NGO_1823</name>
</gene>
<feature type="chain" id="PRO_0000104768" description="Large ribosomal subunit protein uL15">
    <location>
        <begin position="1"/>
        <end position="144"/>
    </location>
</feature>
<feature type="region of interest" description="Disordered" evidence="2">
    <location>
        <begin position="20"/>
        <end position="49"/>
    </location>
</feature>
<feature type="compositionally biased region" description="Gly residues" evidence="2">
    <location>
        <begin position="21"/>
        <end position="31"/>
    </location>
</feature>
<proteinExistence type="inferred from homology"/>
<sequence length="144" mass="14954">MFLNTIQPAVGATHAGRRVGRGIGSGLGKTGGRGHKGQKSRSGGFHKVGFEGGQMPLQRRLPKRGFKSLTVSANAQLRLSELESIAVNEIDILVLKQAGLIASTVSNVKVIASGEISKAVALKGIKVTKGARAAIEDVGGKIEM</sequence>